<comment type="catalytic activity">
    <reaction evidence="1">
        <text>D-erythro-1-(imidazol-4-yl)glycerol 3-phosphate = 3-(imidazol-4-yl)-2-oxopropyl phosphate + H2O</text>
        <dbReference type="Rhea" id="RHEA:11040"/>
        <dbReference type="ChEBI" id="CHEBI:15377"/>
        <dbReference type="ChEBI" id="CHEBI:57766"/>
        <dbReference type="ChEBI" id="CHEBI:58278"/>
        <dbReference type="EC" id="4.2.1.19"/>
    </reaction>
</comment>
<comment type="pathway">
    <text evidence="1">Amino-acid biosynthesis; L-histidine biosynthesis; L-histidine from 5-phospho-alpha-D-ribose 1-diphosphate: step 6/9.</text>
</comment>
<comment type="subcellular location">
    <subcellularLocation>
        <location evidence="1">Cytoplasm</location>
    </subcellularLocation>
</comment>
<comment type="similarity">
    <text evidence="1">Belongs to the imidazoleglycerol-phosphate dehydratase family.</text>
</comment>
<reference key="1">
    <citation type="journal article" date="2005" name="PLoS Genet.">
        <title>Life in hot carbon monoxide: the complete genome sequence of Carboxydothermus hydrogenoformans Z-2901.</title>
        <authorList>
            <person name="Wu M."/>
            <person name="Ren Q."/>
            <person name="Durkin A.S."/>
            <person name="Daugherty S.C."/>
            <person name="Brinkac L.M."/>
            <person name="Dodson R.J."/>
            <person name="Madupu R."/>
            <person name="Sullivan S.A."/>
            <person name="Kolonay J.F."/>
            <person name="Nelson W.C."/>
            <person name="Tallon L.J."/>
            <person name="Jones K.M."/>
            <person name="Ulrich L.E."/>
            <person name="Gonzalez J.M."/>
            <person name="Zhulin I.B."/>
            <person name="Robb F.T."/>
            <person name="Eisen J.A."/>
        </authorList>
    </citation>
    <scope>NUCLEOTIDE SEQUENCE [LARGE SCALE GENOMIC DNA]</scope>
    <source>
        <strain>ATCC BAA-161 / DSM 6008 / Z-2901</strain>
    </source>
</reference>
<dbReference type="EC" id="4.2.1.19" evidence="1"/>
<dbReference type="EMBL" id="CP000141">
    <property type="protein sequence ID" value="ABB13804.1"/>
    <property type="molecule type" value="Genomic_DNA"/>
</dbReference>
<dbReference type="RefSeq" id="WP_011344009.1">
    <property type="nucleotide sequence ID" value="NC_007503.1"/>
</dbReference>
<dbReference type="SMR" id="Q3AD51"/>
<dbReference type="FunCoup" id="Q3AD51">
    <property type="interactions" value="373"/>
</dbReference>
<dbReference type="STRING" id="246194.CHY_1087"/>
<dbReference type="KEGG" id="chy:CHY_1087"/>
<dbReference type="eggNOG" id="COG0131">
    <property type="taxonomic scope" value="Bacteria"/>
</dbReference>
<dbReference type="HOGENOM" id="CLU_044308_3_0_9"/>
<dbReference type="InParanoid" id="Q3AD51"/>
<dbReference type="OrthoDB" id="9790411at2"/>
<dbReference type="UniPathway" id="UPA00031">
    <property type="reaction ID" value="UER00011"/>
</dbReference>
<dbReference type="Proteomes" id="UP000002706">
    <property type="component" value="Chromosome"/>
</dbReference>
<dbReference type="GO" id="GO:0005737">
    <property type="term" value="C:cytoplasm"/>
    <property type="evidence" value="ECO:0007669"/>
    <property type="project" value="UniProtKB-SubCell"/>
</dbReference>
<dbReference type="GO" id="GO:0004424">
    <property type="term" value="F:imidazoleglycerol-phosphate dehydratase activity"/>
    <property type="evidence" value="ECO:0007669"/>
    <property type="project" value="UniProtKB-UniRule"/>
</dbReference>
<dbReference type="GO" id="GO:0000105">
    <property type="term" value="P:L-histidine biosynthetic process"/>
    <property type="evidence" value="ECO:0007669"/>
    <property type="project" value="UniProtKB-UniRule"/>
</dbReference>
<dbReference type="CDD" id="cd07914">
    <property type="entry name" value="IGPD"/>
    <property type="match status" value="1"/>
</dbReference>
<dbReference type="FunFam" id="3.30.230.40:FF:000001">
    <property type="entry name" value="Imidazoleglycerol-phosphate dehydratase HisB"/>
    <property type="match status" value="1"/>
</dbReference>
<dbReference type="FunFam" id="3.30.230.40:FF:000003">
    <property type="entry name" value="Imidazoleglycerol-phosphate dehydratase HisB"/>
    <property type="match status" value="1"/>
</dbReference>
<dbReference type="Gene3D" id="3.30.230.40">
    <property type="entry name" value="Imidazole glycerol phosphate dehydratase, domain 1"/>
    <property type="match status" value="2"/>
</dbReference>
<dbReference type="HAMAP" id="MF_00076">
    <property type="entry name" value="HisB"/>
    <property type="match status" value="1"/>
</dbReference>
<dbReference type="InterPro" id="IPR038494">
    <property type="entry name" value="IGPD_sf"/>
</dbReference>
<dbReference type="InterPro" id="IPR000807">
    <property type="entry name" value="ImidazoleglycerolP_deHydtase"/>
</dbReference>
<dbReference type="InterPro" id="IPR020565">
    <property type="entry name" value="ImidazoleglycerP_deHydtase_CS"/>
</dbReference>
<dbReference type="InterPro" id="IPR020568">
    <property type="entry name" value="Ribosomal_Su5_D2-typ_SF"/>
</dbReference>
<dbReference type="NCBIfam" id="NF002111">
    <property type="entry name" value="PRK00951.2-1"/>
    <property type="match status" value="1"/>
</dbReference>
<dbReference type="NCBIfam" id="NF002114">
    <property type="entry name" value="PRK00951.2-4"/>
    <property type="match status" value="1"/>
</dbReference>
<dbReference type="PANTHER" id="PTHR23133:SF2">
    <property type="entry name" value="IMIDAZOLEGLYCEROL-PHOSPHATE DEHYDRATASE"/>
    <property type="match status" value="1"/>
</dbReference>
<dbReference type="PANTHER" id="PTHR23133">
    <property type="entry name" value="IMIDAZOLEGLYCEROL-PHOSPHATE DEHYDRATASE HIS7"/>
    <property type="match status" value="1"/>
</dbReference>
<dbReference type="Pfam" id="PF00475">
    <property type="entry name" value="IGPD"/>
    <property type="match status" value="1"/>
</dbReference>
<dbReference type="SUPFAM" id="SSF54211">
    <property type="entry name" value="Ribosomal protein S5 domain 2-like"/>
    <property type="match status" value="2"/>
</dbReference>
<dbReference type="PROSITE" id="PS00954">
    <property type="entry name" value="IGP_DEHYDRATASE_1"/>
    <property type="match status" value="1"/>
</dbReference>
<dbReference type="PROSITE" id="PS00955">
    <property type="entry name" value="IGP_DEHYDRATASE_2"/>
    <property type="match status" value="1"/>
</dbReference>
<organism>
    <name type="scientific">Carboxydothermus hydrogenoformans (strain ATCC BAA-161 / DSM 6008 / Z-2901)</name>
    <dbReference type="NCBI Taxonomy" id="246194"/>
    <lineage>
        <taxon>Bacteria</taxon>
        <taxon>Bacillati</taxon>
        <taxon>Bacillota</taxon>
        <taxon>Clostridia</taxon>
        <taxon>Thermoanaerobacterales</taxon>
        <taxon>Thermoanaerobacteraceae</taxon>
        <taxon>Carboxydothermus</taxon>
    </lineage>
</organism>
<protein>
    <recommendedName>
        <fullName evidence="1">Imidazoleglycerol-phosphate dehydratase</fullName>
        <shortName evidence="1">IGPD</shortName>
        <ecNumber evidence="1">4.2.1.19</ecNumber>
    </recommendedName>
</protein>
<evidence type="ECO:0000255" key="1">
    <source>
        <dbReference type="HAMAP-Rule" id="MF_00076"/>
    </source>
</evidence>
<accession>Q3AD51</accession>
<name>HIS7_CARHZ</name>
<keyword id="KW-0028">Amino-acid biosynthesis</keyword>
<keyword id="KW-0963">Cytoplasm</keyword>
<keyword id="KW-0368">Histidine biosynthesis</keyword>
<keyword id="KW-0456">Lyase</keyword>
<keyword id="KW-1185">Reference proteome</keyword>
<sequence>MRRAEVQRTTLETMINVEFTMDGNGEFSGTSGLGFFDHMLTLFCKFGGFNLNLSCQGDLEVDDHHTVEDIGLVLGEAFSKALGDKKGIARFASGFYPMDEALMLIAVDISGRPYLAFEADFPPVLAGKFNYQMVEEFLRGFVQKAGITLHVREISGKNLHHKAEAIFKGLGRTLKVAVSVQGDELPSTKGVI</sequence>
<proteinExistence type="inferred from homology"/>
<gene>
    <name evidence="1" type="primary">hisB</name>
    <name type="ordered locus">CHY_1087</name>
</gene>
<feature type="chain" id="PRO_1000010267" description="Imidazoleglycerol-phosphate dehydratase">
    <location>
        <begin position="1"/>
        <end position="192"/>
    </location>
</feature>